<protein>
    <recommendedName>
        <fullName evidence="1">Probable Fe(2+)-trafficking protein</fullName>
    </recommendedName>
</protein>
<name>FETP_SALPC</name>
<sequence>MSRTIFCTYLQRDAEGQDFQLYPGELGKRIYNEISKDAWAQWQHKQTMLINEKKLNMMNAEHRKLLEQEMVSFLFEGKDVHIEGYTPEDKK</sequence>
<proteinExistence type="inferred from homology"/>
<evidence type="ECO:0000255" key="1">
    <source>
        <dbReference type="HAMAP-Rule" id="MF_00686"/>
    </source>
</evidence>
<organism>
    <name type="scientific">Salmonella paratyphi C (strain RKS4594)</name>
    <dbReference type="NCBI Taxonomy" id="476213"/>
    <lineage>
        <taxon>Bacteria</taxon>
        <taxon>Pseudomonadati</taxon>
        <taxon>Pseudomonadota</taxon>
        <taxon>Gammaproteobacteria</taxon>
        <taxon>Enterobacterales</taxon>
        <taxon>Enterobacteriaceae</taxon>
        <taxon>Salmonella</taxon>
    </lineage>
</organism>
<feature type="chain" id="PRO_1000147769" description="Probable Fe(2+)-trafficking protein">
    <location>
        <begin position="1"/>
        <end position="91"/>
    </location>
</feature>
<keyword id="KW-0408">Iron</keyword>
<accession>C0PY89</accession>
<dbReference type="EMBL" id="CP000857">
    <property type="protein sequence ID" value="ACN47263.1"/>
    <property type="molecule type" value="Genomic_DNA"/>
</dbReference>
<dbReference type="RefSeq" id="WP_000091706.1">
    <property type="nucleotide sequence ID" value="NC_012125.1"/>
</dbReference>
<dbReference type="SMR" id="C0PY89"/>
<dbReference type="KEGG" id="sei:SPC_3177"/>
<dbReference type="HOGENOM" id="CLU_170994_0_0_6"/>
<dbReference type="Proteomes" id="UP000001599">
    <property type="component" value="Chromosome"/>
</dbReference>
<dbReference type="GO" id="GO:0005829">
    <property type="term" value="C:cytosol"/>
    <property type="evidence" value="ECO:0007669"/>
    <property type="project" value="TreeGrafter"/>
</dbReference>
<dbReference type="GO" id="GO:0005506">
    <property type="term" value="F:iron ion binding"/>
    <property type="evidence" value="ECO:0007669"/>
    <property type="project" value="UniProtKB-UniRule"/>
</dbReference>
<dbReference type="GO" id="GO:0034599">
    <property type="term" value="P:cellular response to oxidative stress"/>
    <property type="evidence" value="ECO:0007669"/>
    <property type="project" value="TreeGrafter"/>
</dbReference>
<dbReference type="FunFam" id="1.10.3880.10:FF:000001">
    <property type="entry name" value="Probable Fe(2+)-trafficking protein"/>
    <property type="match status" value="1"/>
</dbReference>
<dbReference type="Gene3D" id="1.10.3880.10">
    <property type="entry name" value="Fe(II) trafficking protein YggX"/>
    <property type="match status" value="1"/>
</dbReference>
<dbReference type="HAMAP" id="MF_00686">
    <property type="entry name" value="Fe_traffic_YggX"/>
    <property type="match status" value="1"/>
</dbReference>
<dbReference type="InterPro" id="IPR007457">
    <property type="entry name" value="Fe_traffick_prot_YggX"/>
</dbReference>
<dbReference type="InterPro" id="IPR036766">
    <property type="entry name" value="Fe_traffick_prot_YggX_sf"/>
</dbReference>
<dbReference type="NCBIfam" id="NF003817">
    <property type="entry name" value="PRK05408.1"/>
    <property type="match status" value="1"/>
</dbReference>
<dbReference type="PANTHER" id="PTHR36965">
    <property type="entry name" value="FE(2+)-TRAFFICKING PROTEIN-RELATED"/>
    <property type="match status" value="1"/>
</dbReference>
<dbReference type="PANTHER" id="PTHR36965:SF1">
    <property type="entry name" value="FE(2+)-TRAFFICKING PROTEIN-RELATED"/>
    <property type="match status" value="1"/>
</dbReference>
<dbReference type="Pfam" id="PF04362">
    <property type="entry name" value="Iron_traffic"/>
    <property type="match status" value="1"/>
</dbReference>
<dbReference type="PIRSF" id="PIRSF029827">
    <property type="entry name" value="Fe_traffic_YggX"/>
    <property type="match status" value="1"/>
</dbReference>
<dbReference type="SUPFAM" id="SSF111148">
    <property type="entry name" value="YggX-like"/>
    <property type="match status" value="1"/>
</dbReference>
<gene>
    <name evidence="1" type="primary">yggX</name>
    <name type="ordered locus">SPC_3177</name>
</gene>
<comment type="function">
    <text evidence="1">Could be a mediator in iron transactions between iron acquisition and iron-requiring processes, such as synthesis and/or repair of Fe-S clusters in biosynthetic enzymes.</text>
</comment>
<comment type="subunit">
    <text evidence="1">Monomer.</text>
</comment>
<comment type="similarity">
    <text evidence="1">Belongs to the Fe(2+)-trafficking protein family.</text>
</comment>
<reference key="1">
    <citation type="journal article" date="2009" name="PLoS ONE">
        <title>Salmonella paratyphi C: genetic divergence from Salmonella choleraesuis and pathogenic convergence with Salmonella typhi.</title>
        <authorList>
            <person name="Liu W.-Q."/>
            <person name="Feng Y."/>
            <person name="Wang Y."/>
            <person name="Zou Q.-H."/>
            <person name="Chen F."/>
            <person name="Guo J.-T."/>
            <person name="Peng Y.-H."/>
            <person name="Jin Y."/>
            <person name="Li Y.-G."/>
            <person name="Hu S.-N."/>
            <person name="Johnston R.N."/>
            <person name="Liu G.-R."/>
            <person name="Liu S.-L."/>
        </authorList>
    </citation>
    <scope>NUCLEOTIDE SEQUENCE [LARGE SCALE GENOMIC DNA]</scope>
    <source>
        <strain>RKS4594</strain>
    </source>
</reference>